<reference key="1">
    <citation type="journal article" date="2006" name="Genome Biol.">
        <title>Genomic analysis reveals that Pseudomonas aeruginosa virulence is combinatorial.</title>
        <authorList>
            <person name="Lee D.G."/>
            <person name="Urbach J.M."/>
            <person name="Wu G."/>
            <person name="Liberati N.T."/>
            <person name="Feinbaum R.L."/>
            <person name="Miyata S."/>
            <person name="Diggins L.T."/>
            <person name="He J."/>
            <person name="Saucier M."/>
            <person name="Deziel E."/>
            <person name="Friedman L."/>
            <person name="Li L."/>
            <person name="Grills G."/>
            <person name="Montgomery K."/>
            <person name="Kucherlapati R."/>
            <person name="Rahme L.G."/>
            <person name="Ausubel F.M."/>
        </authorList>
    </citation>
    <scope>NUCLEOTIDE SEQUENCE [LARGE SCALE GENOMIC DNA]</scope>
    <source>
        <strain>UCBPP-PA14</strain>
    </source>
</reference>
<sequence length="245" mass="25597">MREALRSLLVALQFLTRLPVRLSAMPTPEQFGRAVLCYPLVGVLIGVVLYAAARSLDGTPPLLQAALLLSLWVALSGALHLDGLADMADAWVGGLGDRERTLAIMKDPRSGPVAVVVLVLVLLLKFSALAALLGQGEAGLLPLAPWLARSSLPLLFLTTPYARPGGLGQAIAEHLPARSLPWVLGGSFGLALAFGLAGLLALLVTLMLFAWLRSRFLARLGGTTGDTAGALVELTECAVLVALAL</sequence>
<name>COBS_PSEAB</name>
<gene>
    <name evidence="1" type="primary">cobS</name>
    <name type="ordered locus">PA14_47650</name>
</gene>
<keyword id="KW-0997">Cell inner membrane</keyword>
<keyword id="KW-1003">Cell membrane</keyword>
<keyword id="KW-0169">Cobalamin biosynthesis</keyword>
<keyword id="KW-0460">Magnesium</keyword>
<keyword id="KW-0472">Membrane</keyword>
<keyword id="KW-0808">Transferase</keyword>
<keyword id="KW-0812">Transmembrane</keyword>
<keyword id="KW-1133">Transmembrane helix</keyword>
<proteinExistence type="inferred from homology"/>
<dbReference type="EC" id="2.7.8.26" evidence="1"/>
<dbReference type="EMBL" id="CP000438">
    <property type="protein sequence ID" value="ABJ10469.1"/>
    <property type="molecule type" value="Genomic_DNA"/>
</dbReference>
<dbReference type="RefSeq" id="WP_003109282.1">
    <property type="nucleotide sequence ID" value="NZ_CP034244.1"/>
</dbReference>
<dbReference type="KEGG" id="pau:PA14_47650"/>
<dbReference type="PseudoCAP" id="PA14_47650"/>
<dbReference type="HOGENOM" id="CLU_057426_3_1_6"/>
<dbReference type="BioCyc" id="PAER208963:G1G74-4003-MONOMER"/>
<dbReference type="UniPathway" id="UPA00148">
    <property type="reaction ID" value="UER00238"/>
</dbReference>
<dbReference type="Proteomes" id="UP000000653">
    <property type="component" value="Chromosome"/>
</dbReference>
<dbReference type="GO" id="GO:0005886">
    <property type="term" value="C:plasma membrane"/>
    <property type="evidence" value="ECO:0007669"/>
    <property type="project" value="UniProtKB-SubCell"/>
</dbReference>
<dbReference type="GO" id="GO:0051073">
    <property type="term" value="F:adenosylcobinamide-GDP ribazoletransferase activity"/>
    <property type="evidence" value="ECO:0007669"/>
    <property type="project" value="UniProtKB-UniRule"/>
</dbReference>
<dbReference type="GO" id="GO:0008818">
    <property type="term" value="F:cobalamin 5'-phosphate synthase activity"/>
    <property type="evidence" value="ECO:0007669"/>
    <property type="project" value="UniProtKB-UniRule"/>
</dbReference>
<dbReference type="GO" id="GO:0009236">
    <property type="term" value="P:cobalamin biosynthetic process"/>
    <property type="evidence" value="ECO:0007669"/>
    <property type="project" value="UniProtKB-UniRule"/>
</dbReference>
<dbReference type="HAMAP" id="MF_00719">
    <property type="entry name" value="CobS"/>
    <property type="match status" value="1"/>
</dbReference>
<dbReference type="InterPro" id="IPR003805">
    <property type="entry name" value="CobS"/>
</dbReference>
<dbReference type="NCBIfam" id="TIGR00317">
    <property type="entry name" value="cobS"/>
    <property type="match status" value="1"/>
</dbReference>
<dbReference type="NCBIfam" id="NF001278">
    <property type="entry name" value="PRK00235.1-5"/>
    <property type="match status" value="1"/>
</dbReference>
<dbReference type="PANTHER" id="PTHR34148">
    <property type="entry name" value="ADENOSYLCOBINAMIDE-GDP RIBAZOLETRANSFERASE"/>
    <property type="match status" value="1"/>
</dbReference>
<dbReference type="PANTHER" id="PTHR34148:SF1">
    <property type="entry name" value="ADENOSYLCOBINAMIDE-GDP RIBAZOLETRANSFERASE"/>
    <property type="match status" value="1"/>
</dbReference>
<dbReference type="Pfam" id="PF02654">
    <property type="entry name" value="CobS"/>
    <property type="match status" value="1"/>
</dbReference>
<comment type="function">
    <text evidence="1">Joins adenosylcobinamide-GDP and alpha-ribazole to generate adenosylcobalamin (Ado-cobalamin). Also synthesizes adenosylcobalamin 5'-phosphate from adenosylcobinamide-GDP and alpha-ribazole 5'-phosphate.</text>
</comment>
<comment type="catalytic activity">
    <reaction evidence="1">
        <text>alpha-ribazole + adenosylcob(III)inamide-GDP = adenosylcob(III)alamin + GMP + H(+)</text>
        <dbReference type="Rhea" id="RHEA:16049"/>
        <dbReference type="ChEBI" id="CHEBI:10329"/>
        <dbReference type="ChEBI" id="CHEBI:15378"/>
        <dbReference type="ChEBI" id="CHEBI:18408"/>
        <dbReference type="ChEBI" id="CHEBI:58115"/>
        <dbReference type="ChEBI" id="CHEBI:60487"/>
        <dbReference type="EC" id="2.7.8.26"/>
    </reaction>
</comment>
<comment type="catalytic activity">
    <reaction evidence="1">
        <text>alpha-ribazole 5'-phosphate + adenosylcob(III)inamide-GDP = adenosylcob(III)alamin 5'-phosphate + GMP + H(+)</text>
        <dbReference type="Rhea" id="RHEA:23560"/>
        <dbReference type="ChEBI" id="CHEBI:15378"/>
        <dbReference type="ChEBI" id="CHEBI:57918"/>
        <dbReference type="ChEBI" id="CHEBI:58115"/>
        <dbReference type="ChEBI" id="CHEBI:60487"/>
        <dbReference type="ChEBI" id="CHEBI:60493"/>
        <dbReference type="EC" id="2.7.8.26"/>
    </reaction>
</comment>
<comment type="cofactor">
    <cofactor evidence="1">
        <name>Mg(2+)</name>
        <dbReference type="ChEBI" id="CHEBI:18420"/>
    </cofactor>
</comment>
<comment type="pathway">
    <text evidence="1">Cofactor biosynthesis; adenosylcobalamin biosynthesis; adenosylcobalamin from cob(II)yrinate a,c-diamide: step 7/7.</text>
</comment>
<comment type="subcellular location">
    <subcellularLocation>
        <location evidence="1">Cell inner membrane</location>
        <topology evidence="1">Multi-pass membrane protein</topology>
    </subcellularLocation>
</comment>
<comment type="similarity">
    <text evidence="1">Belongs to the CobS family.</text>
</comment>
<accession>Q02JC2</accession>
<protein>
    <recommendedName>
        <fullName evidence="1">Adenosylcobinamide-GDP ribazoletransferase</fullName>
        <ecNumber evidence="1">2.7.8.26</ecNumber>
    </recommendedName>
    <alternativeName>
        <fullName evidence="1">Cobalamin synthase</fullName>
    </alternativeName>
    <alternativeName>
        <fullName evidence="1">Cobalamin-5'-phosphate synthase</fullName>
    </alternativeName>
</protein>
<organism>
    <name type="scientific">Pseudomonas aeruginosa (strain UCBPP-PA14)</name>
    <dbReference type="NCBI Taxonomy" id="208963"/>
    <lineage>
        <taxon>Bacteria</taxon>
        <taxon>Pseudomonadati</taxon>
        <taxon>Pseudomonadota</taxon>
        <taxon>Gammaproteobacteria</taxon>
        <taxon>Pseudomonadales</taxon>
        <taxon>Pseudomonadaceae</taxon>
        <taxon>Pseudomonas</taxon>
    </lineage>
</organism>
<evidence type="ECO:0000255" key="1">
    <source>
        <dbReference type="HAMAP-Rule" id="MF_00719"/>
    </source>
</evidence>
<feature type="chain" id="PRO_1000045789" description="Adenosylcobinamide-GDP ribazoletransferase">
    <location>
        <begin position="1"/>
        <end position="245"/>
    </location>
</feature>
<feature type="transmembrane region" description="Helical" evidence="1">
    <location>
        <begin position="31"/>
        <end position="51"/>
    </location>
</feature>
<feature type="transmembrane region" description="Helical" evidence="1">
    <location>
        <begin position="61"/>
        <end position="81"/>
    </location>
</feature>
<feature type="transmembrane region" description="Helical" evidence="1">
    <location>
        <begin position="113"/>
        <end position="133"/>
    </location>
</feature>
<feature type="transmembrane region" description="Helical" evidence="1">
    <location>
        <begin position="138"/>
        <end position="158"/>
    </location>
</feature>
<feature type="transmembrane region" description="Helical" evidence="1">
    <location>
        <begin position="192"/>
        <end position="212"/>
    </location>
</feature>